<feature type="chain" id="PRO_1000093805" description="Translation initiation factor IF-2">
    <location>
        <begin position="1"/>
        <end position="947"/>
    </location>
</feature>
<feature type="domain" description="tr-type G">
    <location>
        <begin position="443"/>
        <end position="614"/>
    </location>
</feature>
<feature type="region of interest" description="Disordered" evidence="3">
    <location>
        <begin position="47"/>
        <end position="332"/>
    </location>
</feature>
<feature type="region of interest" description="G1" evidence="1">
    <location>
        <begin position="452"/>
        <end position="459"/>
    </location>
</feature>
<feature type="region of interest" description="G2" evidence="1">
    <location>
        <begin position="477"/>
        <end position="481"/>
    </location>
</feature>
<feature type="region of interest" description="G3" evidence="1">
    <location>
        <begin position="502"/>
        <end position="505"/>
    </location>
</feature>
<feature type="region of interest" description="G4" evidence="1">
    <location>
        <begin position="556"/>
        <end position="559"/>
    </location>
</feature>
<feature type="region of interest" description="G5" evidence="1">
    <location>
        <begin position="592"/>
        <end position="594"/>
    </location>
</feature>
<feature type="compositionally biased region" description="Basic and acidic residues" evidence="3">
    <location>
        <begin position="86"/>
        <end position="95"/>
    </location>
</feature>
<feature type="compositionally biased region" description="Pro residues" evidence="3">
    <location>
        <begin position="105"/>
        <end position="123"/>
    </location>
</feature>
<feature type="compositionally biased region" description="Low complexity" evidence="3">
    <location>
        <begin position="131"/>
        <end position="145"/>
    </location>
</feature>
<feature type="compositionally biased region" description="Pro residues" evidence="3">
    <location>
        <begin position="146"/>
        <end position="171"/>
    </location>
</feature>
<feature type="compositionally biased region" description="Pro residues" evidence="3">
    <location>
        <begin position="210"/>
        <end position="225"/>
    </location>
</feature>
<feature type="compositionally biased region" description="Gly residues" evidence="3">
    <location>
        <begin position="255"/>
        <end position="318"/>
    </location>
</feature>
<feature type="compositionally biased region" description="Basic residues" evidence="3">
    <location>
        <begin position="322"/>
        <end position="331"/>
    </location>
</feature>
<feature type="binding site" evidence="2">
    <location>
        <begin position="452"/>
        <end position="459"/>
    </location>
    <ligand>
        <name>GTP</name>
        <dbReference type="ChEBI" id="CHEBI:37565"/>
    </ligand>
</feature>
<feature type="binding site" evidence="2">
    <location>
        <begin position="502"/>
        <end position="506"/>
    </location>
    <ligand>
        <name>GTP</name>
        <dbReference type="ChEBI" id="CHEBI:37565"/>
    </ligand>
</feature>
<feature type="binding site" evidence="2">
    <location>
        <begin position="556"/>
        <end position="559"/>
    </location>
    <ligand>
        <name>GTP</name>
        <dbReference type="ChEBI" id="CHEBI:37565"/>
    </ligand>
</feature>
<proteinExistence type="inferred from homology"/>
<protein>
    <recommendedName>
        <fullName evidence="2">Translation initiation factor IF-2</fullName>
    </recommendedName>
</protein>
<gene>
    <name evidence="2" type="primary">infB</name>
    <name type="ordered locus">MMAR_1894</name>
</gene>
<sequence>MAGKARVHELAKELGVTSKEVLARLSEQGEFVKSASSTVEAPVARRLRESFGGGKSAPAKGSDTGAAKGVAKAPQKVPGVSPAAKAPDRSLDAALDKAVGNGAPAPVPAPAPAPTPAPAPAPAQPADSGVAPPAATPAAPAASAAPAPPKAPLPGQRPAPTPGKPAAPQAPHPGMAPGARPGPVPKPGVRTPRVGNNPFSSAQPVDRPIPRPQAPRPGAPRPGAPRPGGASPGNMPPRPGGASGGPRPPRTGAPRPGGGRPGGPGGGRSDGGGGNYRGGGGGVGAAPGGGFRGRPGGGGGGGRPGQRGGAAGAFGRPGGAPRRGRKSKRAKRAEYENMQAPVVGGVRLPHGNGETIRLARGASLSDFADKINANPAALVQALFNLGEMVTATQSVGDETLELLGSEMNYNVQVVSPEDEDRELLESFDLTYGEDSGDESELQTRPPVVTVMGHVDHGKTRLLDTIRKANVREGEAGGITQHIGAYQVSVDHDGTERLITFIDTPGHEAFTAMRARGAKATDIAILVVAADDGVMPQTVEAINHAQAADVPIVVAVNKIDKEGADPAKIRGQLTEYGLVAEDFGGDTMFVDISAKQGTNIEALEEAVLLTADAALDLRANPDMEAQGVAIEAHLDRGRGPVATVLVQRGTLRVGDSVVAGDAYGRVRRMVDEHGEDVEEALPSRPVQVIGFTSVPGAGDNFLVVDEDRIARQIADRRSARKRNALAARSRKRISLEDLDSALKETSQLNLILKGDNAGTVEALEEALMGIEVDDEVALRVIDRGVGGITETNVNLASASDAIIIGFNVRAEGKATELANREGVEIRYYSVIYQAIDEIEKALRGMLKPIYEEVELGRAEIRALFRSSKVGLIAGCMISSGVVRRNAKARLLRDNIVVVENLSIHSLRREKDDVTEVREGFECGMTLGYSDLKEGDFIESYELVQKDRS</sequence>
<reference key="1">
    <citation type="journal article" date="2008" name="Genome Res.">
        <title>Insights from the complete genome sequence of Mycobacterium marinum on the evolution of Mycobacterium tuberculosis.</title>
        <authorList>
            <person name="Stinear T.P."/>
            <person name="Seemann T."/>
            <person name="Harrison P.F."/>
            <person name="Jenkin G.A."/>
            <person name="Davies J.K."/>
            <person name="Johnson P.D."/>
            <person name="Abdellah Z."/>
            <person name="Arrowsmith C."/>
            <person name="Chillingworth T."/>
            <person name="Churcher C."/>
            <person name="Clarke K."/>
            <person name="Cronin A."/>
            <person name="Davis P."/>
            <person name="Goodhead I."/>
            <person name="Holroyd N."/>
            <person name="Jagels K."/>
            <person name="Lord A."/>
            <person name="Moule S."/>
            <person name="Mungall K."/>
            <person name="Norbertczak H."/>
            <person name="Quail M.A."/>
            <person name="Rabbinowitsch E."/>
            <person name="Walker D."/>
            <person name="White B."/>
            <person name="Whitehead S."/>
            <person name="Small P.L."/>
            <person name="Brosch R."/>
            <person name="Ramakrishnan L."/>
            <person name="Fischbach M.A."/>
            <person name="Parkhill J."/>
            <person name="Cole S.T."/>
        </authorList>
    </citation>
    <scope>NUCLEOTIDE SEQUENCE [LARGE SCALE GENOMIC DNA]</scope>
    <source>
        <strain>ATCC BAA-535 / M</strain>
    </source>
</reference>
<keyword id="KW-0963">Cytoplasm</keyword>
<keyword id="KW-0342">GTP-binding</keyword>
<keyword id="KW-0396">Initiation factor</keyword>
<keyword id="KW-0547">Nucleotide-binding</keyword>
<keyword id="KW-0648">Protein biosynthesis</keyword>
<keyword id="KW-1185">Reference proteome</keyword>
<comment type="function">
    <text evidence="2">One of the essential components for the initiation of protein synthesis. Protects formylmethionyl-tRNA from spontaneous hydrolysis and promotes its binding to the 30S ribosomal subunits. Also involved in the hydrolysis of GTP during the formation of the 70S ribosomal complex.</text>
</comment>
<comment type="subcellular location">
    <subcellularLocation>
        <location evidence="2">Cytoplasm</location>
    </subcellularLocation>
</comment>
<comment type="similarity">
    <text evidence="2">Belongs to the TRAFAC class translation factor GTPase superfamily. Classic translation factor GTPase family. IF-2 subfamily.</text>
</comment>
<organism>
    <name type="scientific">Mycobacterium marinum (strain ATCC BAA-535 / M)</name>
    <dbReference type="NCBI Taxonomy" id="216594"/>
    <lineage>
        <taxon>Bacteria</taxon>
        <taxon>Bacillati</taxon>
        <taxon>Actinomycetota</taxon>
        <taxon>Actinomycetes</taxon>
        <taxon>Mycobacteriales</taxon>
        <taxon>Mycobacteriaceae</taxon>
        <taxon>Mycobacterium</taxon>
        <taxon>Mycobacterium ulcerans group</taxon>
    </lineage>
</organism>
<evidence type="ECO:0000250" key="1"/>
<evidence type="ECO:0000255" key="2">
    <source>
        <dbReference type="HAMAP-Rule" id="MF_00100"/>
    </source>
</evidence>
<evidence type="ECO:0000256" key="3">
    <source>
        <dbReference type="SAM" id="MobiDB-lite"/>
    </source>
</evidence>
<dbReference type="EMBL" id="CP000854">
    <property type="protein sequence ID" value="ACC40343.1"/>
    <property type="molecule type" value="Genomic_DNA"/>
</dbReference>
<dbReference type="RefSeq" id="WP_012393690.1">
    <property type="nucleotide sequence ID" value="NC_010612.1"/>
</dbReference>
<dbReference type="SMR" id="B2HKS2"/>
<dbReference type="STRING" id="216594.MMAR_1894"/>
<dbReference type="KEGG" id="mmi:MMAR_1894"/>
<dbReference type="eggNOG" id="COG0481">
    <property type="taxonomic scope" value="Bacteria"/>
</dbReference>
<dbReference type="eggNOG" id="COG0532">
    <property type="taxonomic scope" value="Bacteria"/>
</dbReference>
<dbReference type="HOGENOM" id="CLU_006301_9_2_11"/>
<dbReference type="OrthoDB" id="9811804at2"/>
<dbReference type="Proteomes" id="UP000001190">
    <property type="component" value="Chromosome"/>
</dbReference>
<dbReference type="GO" id="GO:0005829">
    <property type="term" value="C:cytosol"/>
    <property type="evidence" value="ECO:0007669"/>
    <property type="project" value="TreeGrafter"/>
</dbReference>
<dbReference type="GO" id="GO:0005525">
    <property type="term" value="F:GTP binding"/>
    <property type="evidence" value="ECO:0007669"/>
    <property type="project" value="UniProtKB-KW"/>
</dbReference>
<dbReference type="GO" id="GO:0003924">
    <property type="term" value="F:GTPase activity"/>
    <property type="evidence" value="ECO:0007669"/>
    <property type="project" value="UniProtKB-UniRule"/>
</dbReference>
<dbReference type="GO" id="GO:0003743">
    <property type="term" value="F:translation initiation factor activity"/>
    <property type="evidence" value="ECO:0007669"/>
    <property type="project" value="UniProtKB-UniRule"/>
</dbReference>
<dbReference type="CDD" id="cd01887">
    <property type="entry name" value="IF2_eIF5B"/>
    <property type="match status" value="1"/>
</dbReference>
<dbReference type="CDD" id="cd03702">
    <property type="entry name" value="IF2_mtIF2_II"/>
    <property type="match status" value="1"/>
</dbReference>
<dbReference type="CDD" id="cd03692">
    <property type="entry name" value="mtIF2_IVc"/>
    <property type="match status" value="1"/>
</dbReference>
<dbReference type="FunFam" id="1.10.10.2480:FF:000003">
    <property type="entry name" value="Translation initiation factor IF-2"/>
    <property type="match status" value="1"/>
</dbReference>
<dbReference type="FunFam" id="2.40.30.10:FF:000007">
    <property type="entry name" value="Translation initiation factor IF-2"/>
    <property type="match status" value="1"/>
</dbReference>
<dbReference type="FunFam" id="2.40.30.10:FF:000008">
    <property type="entry name" value="Translation initiation factor IF-2"/>
    <property type="match status" value="1"/>
</dbReference>
<dbReference type="FunFam" id="3.40.50.10050:FF:000001">
    <property type="entry name" value="Translation initiation factor IF-2"/>
    <property type="match status" value="1"/>
</dbReference>
<dbReference type="FunFam" id="3.40.50.300:FF:000019">
    <property type="entry name" value="Translation initiation factor IF-2"/>
    <property type="match status" value="1"/>
</dbReference>
<dbReference type="Gene3D" id="1.10.10.2480">
    <property type="match status" value="1"/>
</dbReference>
<dbReference type="Gene3D" id="3.40.50.300">
    <property type="entry name" value="P-loop containing nucleotide triphosphate hydrolases"/>
    <property type="match status" value="1"/>
</dbReference>
<dbReference type="Gene3D" id="2.40.30.10">
    <property type="entry name" value="Translation factors"/>
    <property type="match status" value="2"/>
</dbReference>
<dbReference type="Gene3D" id="3.40.50.10050">
    <property type="entry name" value="Translation initiation factor IF- 2, domain 3"/>
    <property type="match status" value="1"/>
</dbReference>
<dbReference type="HAMAP" id="MF_00100_B">
    <property type="entry name" value="IF_2_B"/>
    <property type="match status" value="1"/>
</dbReference>
<dbReference type="InterPro" id="IPR053905">
    <property type="entry name" value="EF-G-like_DII"/>
</dbReference>
<dbReference type="InterPro" id="IPR044145">
    <property type="entry name" value="IF2_II"/>
</dbReference>
<dbReference type="InterPro" id="IPR006847">
    <property type="entry name" value="IF2_N"/>
</dbReference>
<dbReference type="InterPro" id="IPR027417">
    <property type="entry name" value="P-loop_NTPase"/>
</dbReference>
<dbReference type="InterPro" id="IPR005225">
    <property type="entry name" value="Small_GTP-bd"/>
</dbReference>
<dbReference type="InterPro" id="IPR000795">
    <property type="entry name" value="T_Tr_GTP-bd_dom"/>
</dbReference>
<dbReference type="InterPro" id="IPR000178">
    <property type="entry name" value="TF_IF2_bacterial-like"/>
</dbReference>
<dbReference type="InterPro" id="IPR015760">
    <property type="entry name" value="TIF_IF2"/>
</dbReference>
<dbReference type="InterPro" id="IPR023115">
    <property type="entry name" value="TIF_IF2_dom3"/>
</dbReference>
<dbReference type="InterPro" id="IPR036925">
    <property type="entry name" value="TIF_IF2_dom3_sf"/>
</dbReference>
<dbReference type="InterPro" id="IPR009000">
    <property type="entry name" value="Transl_B-barrel_sf"/>
</dbReference>
<dbReference type="NCBIfam" id="TIGR00487">
    <property type="entry name" value="IF-2"/>
    <property type="match status" value="1"/>
</dbReference>
<dbReference type="NCBIfam" id="TIGR00231">
    <property type="entry name" value="small_GTP"/>
    <property type="match status" value="1"/>
</dbReference>
<dbReference type="PANTHER" id="PTHR43381:SF5">
    <property type="entry name" value="TR-TYPE G DOMAIN-CONTAINING PROTEIN"/>
    <property type="match status" value="1"/>
</dbReference>
<dbReference type="PANTHER" id="PTHR43381">
    <property type="entry name" value="TRANSLATION INITIATION FACTOR IF-2-RELATED"/>
    <property type="match status" value="1"/>
</dbReference>
<dbReference type="Pfam" id="PF22042">
    <property type="entry name" value="EF-G_D2"/>
    <property type="match status" value="1"/>
</dbReference>
<dbReference type="Pfam" id="PF00009">
    <property type="entry name" value="GTP_EFTU"/>
    <property type="match status" value="1"/>
</dbReference>
<dbReference type="Pfam" id="PF11987">
    <property type="entry name" value="IF-2"/>
    <property type="match status" value="1"/>
</dbReference>
<dbReference type="Pfam" id="PF04760">
    <property type="entry name" value="IF2_N"/>
    <property type="match status" value="2"/>
</dbReference>
<dbReference type="PRINTS" id="PR00315">
    <property type="entry name" value="ELONGATNFCT"/>
</dbReference>
<dbReference type="SUPFAM" id="SSF52156">
    <property type="entry name" value="Initiation factor IF2/eIF5b, domain 3"/>
    <property type="match status" value="1"/>
</dbReference>
<dbReference type="SUPFAM" id="SSF52540">
    <property type="entry name" value="P-loop containing nucleoside triphosphate hydrolases"/>
    <property type="match status" value="1"/>
</dbReference>
<dbReference type="SUPFAM" id="SSF50447">
    <property type="entry name" value="Translation proteins"/>
    <property type="match status" value="2"/>
</dbReference>
<dbReference type="PROSITE" id="PS51722">
    <property type="entry name" value="G_TR_2"/>
    <property type="match status" value="1"/>
</dbReference>
<dbReference type="PROSITE" id="PS01176">
    <property type="entry name" value="IF2"/>
    <property type="match status" value="1"/>
</dbReference>
<accession>B2HKS2</accession>
<name>IF2_MYCMM</name>